<organism>
    <name type="scientific">Wolinella succinogenes (strain ATCC 29543 / DSM 1740 / CCUG 13145 / JCM 31913 / LMG 7466 / NCTC 11488 / FDC 602W)</name>
    <name type="common">Vibrio succinogenes</name>
    <dbReference type="NCBI Taxonomy" id="273121"/>
    <lineage>
        <taxon>Bacteria</taxon>
        <taxon>Pseudomonadati</taxon>
        <taxon>Campylobacterota</taxon>
        <taxon>Epsilonproteobacteria</taxon>
        <taxon>Campylobacterales</taxon>
        <taxon>Helicobacteraceae</taxon>
        <taxon>Wolinella</taxon>
    </lineage>
</organism>
<accession>Q7M9A6</accession>
<reference key="1">
    <citation type="journal article" date="2003" name="Proc. Natl. Acad. Sci. U.S.A.">
        <title>Complete genome sequence and analysis of Wolinella succinogenes.</title>
        <authorList>
            <person name="Baar C."/>
            <person name="Eppinger M."/>
            <person name="Raddatz G."/>
            <person name="Simon J."/>
            <person name="Lanz C."/>
            <person name="Klimmek O."/>
            <person name="Nandakumar R."/>
            <person name="Gross R."/>
            <person name="Rosinus A."/>
            <person name="Keller H."/>
            <person name="Jagtap P."/>
            <person name="Linke B."/>
            <person name="Meyer F."/>
            <person name="Lederer H."/>
            <person name="Schuster S.C."/>
        </authorList>
    </citation>
    <scope>NUCLEOTIDE SEQUENCE [LARGE SCALE GENOMIC DNA]</scope>
    <source>
        <strain>ATCC 29543 / DSM 1740 / CCUG 13145 / JCM 31913 / LMG 7466 / NCTC 11488 / FDC 602W</strain>
    </source>
</reference>
<evidence type="ECO:0000255" key="1">
    <source>
        <dbReference type="HAMAP-Rule" id="MF_00558"/>
    </source>
</evidence>
<keyword id="KW-0067">ATP-binding</keyword>
<keyword id="KW-0436">Ligase</keyword>
<keyword id="KW-0460">Magnesium</keyword>
<keyword id="KW-0479">Metal-binding</keyword>
<keyword id="KW-0547">Nucleotide-binding</keyword>
<keyword id="KW-1185">Reference proteome</keyword>
<keyword id="KW-0816">Tricarboxylic acid cycle</keyword>
<proteinExistence type="inferred from homology"/>
<protein>
    <recommendedName>
        <fullName evidence="1">Succinate--CoA ligase [ADP-forming] subunit beta</fullName>
        <ecNumber evidence="1">6.2.1.5</ecNumber>
    </recommendedName>
    <alternativeName>
        <fullName evidence="1">Succinyl-CoA synthetase subunit beta</fullName>
        <shortName evidence="1">SCS-beta</shortName>
    </alternativeName>
</protein>
<name>SUCC_WOLSU</name>
<dbReference type="EC" id="6.2.1.5" evidence="1"/>
<dbReference type="EMBL" id="BX571659">
    <property type="protein sequence ID" value="CAE10163.1"/>
    <property type="molecule type" value="Genomic_DNA"/>
</dbReference>
<dbReference type="RefSeq" id="WP_011138956.1">
    <property type="nucleotide sequence ID" value="NC_005090.1"/>
</dbReference>
<dbReference type="SMR" id="Q7M9A6"/>
<dbReference type="STRING" id="273121.WS1065"/>
<dbReference type="KEGG" id="wsu:WS1065"/>
<dbReference type="eggNOG" id="COG0045">
    <property type="taxonomic scope" value="Bacteria"/>
</dbReference>
<dbReference type="HOGENOM" id="CLU_037430_0_2_7"/>
<dbReference type="UniPathway" id="UPA00223">
    <property type="reaction ID" value="UER00999"/>
</dbReference>
<dbReference type="Proteomes" id="UP000000422">
    <property type="component" value="Chromosome"/>
</dbReference>
<dbReference type="GO" id="GO:0005829">
    <property type="term" value="C:cytosol"/>
    <property type="evidence" value="ECO:0007669"/>
    <property type="project" value="TreeGrafter"/>
</dbReference>
<dbReference type="GO" id="GO:0042709">
    <property type="term" value="C:succinate-CoA ligase complex"/>
    <property type="evidence" value="ECO:0007669"/>
    <property type="project" value="TreeGrafter"/>
</dbReference>
<dbReference type="GO" id="GO:0005524">
    <property type="term" value="F:ATP binding"/>
    <property type="evidence" value="ECO:0007669"/>
    <property type="project" value="UniProtKB-UniRule"/>
</dbReference>
<dbReference type="GO" id="GO:0000287">
    <property type="term" value="F:magnesium ion binding"/>
    <property type="evidence" value="ECO:0007669"/>
    <property type="project" value="UniProtKB-UniRule"/>
</dbReference>
<dbReference type="GO" id="GO:0004775">
    <property type="term" value="F:succinate-CoA ligase (ADP-forming) activity"/>
    <property type="evidence" value="ECO:0007669"/>
    <property type="project" value="UniProtKB-UniRule"/>
</dbReference>
<dbReference type="GO" id="GO:0004776">
    <property type="term" value="F:succinate-CoA ligase (GDP-forming) activity"/>
    <property type="evidence" value="ECO:0007669"/>
    <property type="project" value="RHEA"/>
</dbReference>
<dbReference type="GO" id="GO:0006104">
    <property type="term" value="P:succinyl-CoA metabolic process"/>
    <property type="evidence" value="ECO:0007669"/>
    <property type="project" value="TreeGrafter"/>
</dbReference>
<dbReference type="GO" id="GO:0006099">
    <property type="term" value="P:tricarboxylic acid cycle"/>
    <property type="evidence" value="ECO:0007669"/>
    <property type="project" value="UniProtKB-UniRule"/>
</dbReference>
<dbReference type="FunFam" id="3.30.1490.20:FF:000002">
    <property type="entry name" value="Succinate--CoA ligase [ADP-forming] subunit beta"/>
    <property type="match status" value="1"/>
</dbReference>
<dbReference type="FunFam" id="3.30.470.20:FF:000002">
    <property type="entry name" value="Succinate--CoA ligase [ADP-forming] subunit beta"/>
    <property type="match status" value="1"/>
</dbReference>
<dbReference type="FunFam" id="3.40.50.261:FF:000001">
    <property type="entry name" value="Succinate--CoA ligase [ADP-forming] subunit beta"/>
    <property type="match status" value="1"/>
</dbReference>
<dbReference type="Gene3D" id="3.30.1490.20">
    <property type="entry name" value="ATP-grasp fold, A domain"/>
    <property type="match status" value="1"/>
</dbReference>
<dbReference type="Gene3D" id="3.30.470.20">
    <property type="entry name" value="ATP-grasp fold, B domain"/>
    <property type="match status" value="1"/>
</dbReference>
<dbReference type="Gene3D" id="3.40.50.261">
    <property type="entry name" value="Succinyl-CoA synthetase domains"/>
    <property type="match status" value="1"/>
</dbReference>
<dbReference type="HAMAP" id="MF_00558">
    <property type="entry name" value="Succ_CoA_beta"/>
    <property type="match status" value="1"/>
</dbReference>
<dbReference type="InterPro" id="IPR011761">
    <property type="entry name" value="ATP-grasp"/>
</dbReference>
<dbReference type="InterPro" id="IPR013650">
    <property type="entry name" value="ATP-grasp_succ-CoA_synth-type"/>
</dbReference>
<dbReference type="InterPro" id="IPR013815">
    <property type="entry name" value="ATP_grasp_subdomain_1"/>
</dbReference>
<dbReference type="InterPro" id="IPR017866">
    <property type="entry name" value="Succ-CoA_synthase_bsu_CS"/>
</dbReference>
<dbReference type="InterPro" id="IPR005811">
    <property type="entry name" value="SUCC_ACL_C"/>
</dbReference>
<dbReference type="InterPro" id="IPR005809">
    <property type="entry name" value="Succ_CoA_ligase-like_bsu"/>
</dbReference>
<dbReference type="InterPro" id="IPR016102">
    <property type="entry name" value="Succinyl-CoA_synth-like"/>
</dbReference>
<dbReference type="NCBIfam" id="NF001913">
    <property type="entry name" value="PRK00696.1"/>
    <property type="match status" value="1"/>
</dbReference>
<dbReference type="NCBIfam" id="TIGR01016">
    <property type="entry name" value="sucCoAbeta"/>
    <property type="match status" value="1"/>
</dbReference>
<dbReference type="PANTHER" id="PTHR11815:SF10">
    <property type="entry name" value="SUCCINATE--COA LIGASE [GDP-FORMING] SUBUNIT BETA, MITOCHONDRIAL"/>
    <property type="match status" value="1"/>
</dbReference>
<dbReference type="PANTHER" id="PTHR11815">
    <property type="entry name" value="SUCCINYL-COA SYNTHETASE BETA CHAIN"/>
    <property type="match status" value="1"/>
</dbReference>
<dbReference type="Pfam" id="PF08442">
    <property type="entry name" value="ATP-grasp_2"/>
    <property type="match status" value="1"/>
</dbReference>
<dbReference type="Pfam" id="PF00549">
    <property type="entry name" value="Ligase_CoA"/>
    <property type="match status" value="1"/>
</dbReference>
<dbReference type="PIRSF" id="PIRSF001554">
    <property type="entry name" value="SucCS_beta"/>
    <property type="match status" value="1"/>
</dbReference>
<dbReference type="SUPFAM" id="SSF56059">
    <property type="entry name" value="Glutathione synthetase ATP-binding domain-like"/>
    <property type="match status" value="1"/>
</dbReference>
<dbReference type="SUPFAM" id="SSF52210">
    <property type="entry name" value="Succinyl-CoA synthetase domains"/>
    <property type="match status" value="1"/>
</dbReference>
<dbReference type="PROSITE" id="PS50975">
    <property type="entry name" value="ATP_GRASP"/>
    <property type="match status" value="1"/>
</dbReference>
<dbReference type="PROSITE" id="PS01217">
    <property type="entry name" value="SUCCINYL_COA_LIG_3"/>
    <property type="match status" value="1"/>
</dbReference>
<comment type="function">
    <text evidence="1">Succinyl-CoA synthetase functions in the citric acid cycle (TCA), coupling the hydrolysis of succinyl-CoA to the synthesis of either ATP or GTP and thus represents the only step of substrate-level phosphorylation in the TCA. The beta subunit provides nucleotide specificity of the enzyme and binds the substrate succinate, while the binding sites for coenzyme A and phosphate are found in the alpha subunit.</text>
</comment>
<comment type="catalytic activity">
    <reaction evidence="1">
        <text>succinate + ATP + CoA = succinyl-CoA + ADP + phosphate</text>
        <dbReference type="Rhea" id="RHEA:17661"/>
        <dbReference type="ChEBI" id="CHEBI:30031"/>
        <dbReference type="ChEBI" id="CHEBI:30616"/>
        <dbReference type="ChEBI" id="CHEBI:43474"/>
        <dbReference type="ChEBI" id="CHEBI:57287"/>
        <dbReference type="ChEBI" id="CHEBI:57292"/>
        <dbReference type="ChEBI" id="CHEBI:456216"/>
        <dbReference type="EC" id="6.2.1.5"/>
    </reaction>
    <physiologicalReaction direction="right-to-left" evidence="1">
        <dbReference type="Rhea" id="RHEA:17663"/>
    </physiologicalReaction>
</comment>
<comment type="catalytic activity">
    <reaction evidence="1">
        <text>GTP + succinate + CoA = succinyl-CoA + GDP + phosphate</text>
        <dbReference type="Rhea" id="RHEA:22120"/>
        <dbReference type="ChEBI" id="CHEBI:30031"/>
        <dbReference type="ChEBI" id="CHEBI:37565"/>
        <dbReference type="ChEBI" id="CHEBI:43474"/>
        <dbReference type="ChEBI" id="CHEBI:57287"/>
        <dbReference type="ChEBI" id="CHEBI:57292"/>
        <dbReference type="ChEBI" id="CHEBI:58189"/>
    </reaction>
    <physiologicalReaction direction="right-to-left" evidence="1">
        <dbReference type="Rhea" id="RHEA:22122"/>
    </physiologicalReaction>
</comment>
<comment type="cofactor">
    <cofactor evidence="1">
        <name>Mg(2+)</name>
        <dbReference type="ChEBI" id="CHEBI:18420"/>
    </cofactor>
    <text evidence="1">Binds 1 Mg(2+) ion per subunit.</text>
</comment>
<comment type="pathway">
    <text evidence="1">Carbohydrate metabolism; tricarboxylic acid cycle; succinate from succinyl-CoA (ligase route): step 1/1.</text>
</comment>
<comment type="subunit">
    <text evidence="1">Heterotetramer of two alpha and two beta subunits.</text>
</comment>
<comment type="similarity">
    <text evidence="1">Belongs to the succinate/malate CoA ligase beta subunit family.</text>
</comment>
<feature type="chain" id="PRO_1000082259" description="Succinate--CoA ligase [ADP-forming] subunit beta">
    <location>
        <begin position="1"/>
        <end position="392"/>
    </location>
</feature>
<feature type="domain" description="ATP-grasp" evidence="1">
    <location>
        <begin position="9"/>
        <end position="244"/>
    </location>
</feature>
<feature type="binding site" evidence="1">
    <location>
        <position position="46"/>
    </location>
    <ligand>
        <name>ATP</name>
        <dbReference type="ChEBI" id="CHEBI:30616"/>
    </ligand>
</feature>
<feature type="binding site" evidence="1">
    <location>
        <begin position="53"/>
        <end position="55"/>
    </location>
    <ligand>
        <name>ATP</name>
        <dbReference type="ChEBI" id="CHEBI:30616"/>
    </ligand>
</feature>
<feature type="binding site" evidence="1">
    <location>
        <position position="99"/>
    </location>
    <ligand>
        <name>ATP</name>
        <dbReference type="ChEBI" id="CHEBI:30616"/>
    </ligand>
</feature>
<feature type="binding site" evidence="1">
    <location>
        <position position="102"/>
    </location>
    <ligand>
        <name>ATP</name>
        <dbReference type="ChEBI" id="CHEBI:30616"/>
    </ligand>
</feature>
<feature type="binding site" evidence="1">
    <location>
        <position position="107"/>
    </location>
    <ligand>
        <name>ATP</name>
        <dbReference type="ChEBI" id="CHEBI:30616"/>
    </ligand>
</feature>
<feature type="binding site" evidence="1">
    <location>
        <position position="199"/>
    </location>
    <ligand>
        <name>Mg(2+)</name>
        <dbReference type="ChEBI" id="CHEBI:18420"/>
    </ligand>
</feature>
<feature type="binding site" evidence="1">
    <location>
        <position position="213"/>
    </location>
    <ligand>
        <name>Mg(2+)</name>
        <dbReference type="ChEBI" id="CHEBI:18420"/>
    </ligand>
</feature>
<feature type="binding site" evidence="1">
    <location>
        <position position="264"/>
    </location>
    <ligand>
        <name>substrate</name>
        <note>ligand shared with subunit alpha</note>
    </ligand>
</feature>
<feature type="binding site" evidence="1">
    <location>
        <begin position="321"/>
        <end position="323"/>
    </location>
    <ligand>
        <name>substrate</name>
        <note>ligand shared with subunit alpha</note>
    </ligand>
</feature>
<gene>
    <name evidence="1" type="primary">sucC</name>
    <name type="ordered locus">WS1065</name>
</gene>
<sequence length="392" mass="42032">MNIHEYQAKALLAQYGVGIPRGGVAETPAEATVIAQRLGGEIWAIKAQIHAGGRGKAGGVKLAKTPEEAGEIAKAMLGSRLITHQTSLEGKEVHKVYVEEGLGIEREYYLGIVLDRSLEMPVIMASRQGGVDIEEVAKNSPNEIIKVAVDPMIGFRPFHGRKLAFALGLAKEQVGLFVDFCTSLFRLYVQKDAEIVEINPLVFTSCKRFVALDAKISFDNNALYRHPEIVAMRDLSEEESSEIEAGEYNLNYVKLQGNVGCMVNGAGLAMATMDIIKHEGGEPANFLDVGGGAKPETVAKGFEIILKDPNVKAIFVNIFGGIVRCDRVANGILEAAKIVHVSVPVVVRLDGTNAKEAKEILEQANIPNIFAAPSLEGGAKKAVELACQGGAS</sequence>